<keyword id="KW-0106">Calcium</keyword>
<keyword id="KW-0186">Copper</keyword>
<keyword id="KW-0249">Electron transport</keyword>
<keyword id="KW-0349">Heme</keyword>
<keyword id="KW-0408">Iron</keyword>
<keyword id="KW-0460">Magnesium</keyword>
<keyword id="KW-0472">Membrane</keyword>
<keyword id="KW-0479">Metal-binding</keyword>
<keyword id="KW-0496">Mitochondrion</keyword>
<keyword id="KW-0999">Mitochondrion inner membrane</keyword>
<keyword id="KW-0679">Respiratory chain</keyword>
<keyword id="KW-0915">Sodium</keyword>
<keyword id="KW-1278">Translocase</keyword>
<keyword id="KW-0812">Transmembrane</keyword>
<keyword id="KW-1133">Transmembrane helix</keyword>
<keyword id="KW-0813">Transport</keyword>
<proteinExistence type="inferred from homology"/>
<reference key="1">
    <citation type="journal article" date="1995" name="J. Mol. Evol.">
        <title>The complete nucleotide sequence of the mitochondrial DNA genome of the rainbow trout, Oncorhynchus mykiss.</title>
        <authorList>
            <person name="Zardoya R."/>
            <person name="Garrido-Pertierra A."/>
            <person name="Bautista J.M."/>
        </authorList>
    </citation>
    <scope>NUCLEOTIDE SEQUENCE [GENOMIC DNA]</scope>
    <source>
        <tissue>Liver</tissue>
    </source>
</reference>
<protein>
    <recommendedName>
        <fullName>Cytochrome c oxidase subunit 1</fullName>
        <ecNumber>7.1.1.9</ecNumber>
    </recommendedName>
    <alternativeName>
        <fullName>Cytochrome c oxidase polypeptide I</fullName>
    </alternativeName>
</protein>
<geneLocation type="mitochondrion"/>
<comment type="function">
    <text evidence="3">Component of the cytochrome c oxidase, the last enzyme in the mitochondrial electron transport chain which drives oxidative phosphorylation. The respiratory chain contains 3 multisubunit complexes succinate dehydrogenase (complex II, CII), ubiquinol-cytochrome c oxidoreductase (cytochrome b-c1 complex, complex III, CIII) and cytochrome c oxidase (complex IV, CIV), that cooperate to transfer electrons derived from NADH and succinate to molecular oxygen, creating an electrochemical gradient over the inner membrane that drives transmembrane transport and the ATP synthase. Cytochrome c oxidase is the component of the respiratory chain that catalyzes the reduction of oxygen to water. Electrons originating from reduced cytochrome c in the intermembrane space (IMS) are transferred via the dinuclear copper A center (CU(A)) of subunit 2 and heme A of subunit 1 to the active site in subunit 1, a binuclear center (BNC) formed by heme A3 and copper B (CU(B)). The BNC reduces molecular oxygen to 2 water molecules using 4 electrons from cytochrome c in the IMS and 4 protons from the mitochondrial matrix.</text>
</comment>
<comment type="catalytic activity">
    <reaction evidence="3">
        <text>4 Fe(II)-[cytochrome c] + O2 + 8 H(+)(in) = 4 Fe(III)-[cytochrome c] + 2 H2O + 4 H(+)(out)</text>
        <dbReference type="Rhea" id="RHEA:11436"/>
        <dbReference type="Rhea" id="RHEA-COMP:10350"/>
        <dbReference type="Rhea" id="RHEA-COMP:14399"/>
        <dbReference type="ChEBI" id="CHEBI:15377"/>
        <dbReference type="ChEBI" id="CHEBI:15378"/>
        <dbReference type="ChEBI" id="CHEBI:15379"/>
        <dbReference type="ChEBI" id="CHEBI:29033"/>
        <dbReference type="ChEBI" id="CHEBI:29034"/>
        <dbReference type="EC" id="7.1.1.9"/>
    </reaction>
    <physiologicalReaction direction="left-to-right" evidence="3">
        <dbReference type="Rhea" id="RHEA:11437"/>
    </physiologicalReaction>
</comment>
<comment type="cofactor">
    <cofactor evidence="2">
        <name>heme</name>
        <dbReference type="ChEBI" id="CHEBI:30413"/>
    </cofactor>
    <text evidence="2">Binds 2 heme A groups non-covalently per subunit.</text>
</comment>
<comment type="cofactor">
    <cofactor evidence="2">
        <name>Cu cation</name>
        <dbReference type="ChEBI" id="CHEBI:23378"/>
    </cofactor>
    <text evidence="2">Binds a copper B center.</text>
</comment>
<comment type="pathway">
    <text evidence="3">Energy metabolism; oxidative phosphorylation.</text>
</comment>
<comment type="subunit">
    <text evidence="1 2">Component of the cytochrome c oxidase (complex IV, CIV), a multisubunit enzyme composed of 14 subunits. The complex is composed of a catalytic core of 3 subunits MT-CO1, MT-CO2 and MT-CO3, encoded in the mitochondrial DNA, and 11 supernumerary subunits COX4I, COX5A, COX5B, COX6A, COX6B, COX6C, COX7A, COX7B, COX7C, COX8 and NDUFA4, which are encoded in the nuclear genome. The complex exists as a monomer or a dimer and forms supercomplexes (SCs) in the inner mitochondrial membrane with NADH-ubiquinone oxidoreductase (complex I, CI) and ubiquinol-cytochrome c oxidoreductase (cytochrome b-c1 complex, complex III, CIII), resulting in different assemblies (supercomplex SCI(1)III(2)IV(1) and megacomplex MCI(2)III(2)IV(2)) (By similarity). As a newly synthesized protein, rapidly incorporates into a multi-subunit assembly intermediate in the inner membrane, called MITRAC (mitochondrial translation regulation assembly intermediate of cytochrome c oxidase) complex, whose core components are COA3/MITRAC12 and COX14. Within the MITRAC complex, interacts with COA3 and with SMIM20/MITRAC7; the interaction with SMIM20 stabilizes the newly synthesized MT-CO1 and prevents its premature turnover. Interacts with TMEM177 in a COX20-dependent manner (By similarity).</text>
</comment>
<comment type="subcellular location">
    <subcellularLocation>
        <location evidence="2">Mitochondrion inner membrane</location>
        <topology evidence="2">Multi-pass membrane protein</topology>
    </subcellularLocation>
</comment>
<comment type="similarity">
    <text evidence="4">Belongs to the heme-copper respiratory oxidase family.</text>
</comment>
<feature type="chain" id="PRO_0000183370" description="Cytochrome c oxidase subunit 1">
    <location>
        <begin position="1"/>
        <end position="516"/>
    </location>
</feature>
<feature type="topological domain" description="Mitochondrial matrix" evidence="2">
    <location>
        <begin position="1"/>
        <end position="11"/>
    </location>
</feature>
<feature type="transmembrane region" description="Helical; Name=I" evidence="2">
    <location>
        <begin position="12"/>
        <end position="40"/>
    </location>
</feature>
<feature type="topological domain" description="Mitochondrial intermembrane" evidence="2">
    <location>
        <begin position="41"/>
        <end position="50"/>
    </location>
</feature>
<feature type="transmembrane region" description="Helical; Name=II" evidence="2">
    <location>
        <begin position="51"/>
        <end position="86"/>
    </location>
</feature>
<feature type="topological domain" description="Mitochondrial matrix" evidence="2">
    <location>
        <begin position="87"/>
        <end position="94"/>
    </location>
</feature>
<feature type="transmembrane region" description="Helical; Name=III" evidence="2">
    <location>
        <begin position="95"/>
        <end position="117"/>
    </location>
</feature>
<feature type="topological domain" description="Mitochondrial intermembrane" evidence="2">
    <location>
        <begin position="118"/>
        <end position="140"/>
    </location>
</feature>
<feature type="transmembrane region" description="Helical; Name=IV" evidence="2">
    <location>
        <begin position="141"/>
        <end position="170"/>
    </location>
</feature>
<feature type="topological domain" description="Mitochondrial matrix" evidence="2">
    <location>
        <begin position="171"/>
        <end position="182"/>
    </location>
</feature>
<feature type="transmembrane region" description="Helical; Name=V" evidence="2">
    <location>
        <begin position="183"/>
        <end position="212"/>
    </location>
</feature>
<feature type="topological domain" description="Mitochondrial intermembrane" evidence="2">
    <location>
        <begin position="213"/>
        <end position="227"/>
    </location>
</feature>
<feature type="transmembrane region" description="Helical; Name=VI" evidence="2">
    <location>
        <begin position="228"/>
        <end position="261"/>
    </location>
</feature>
<feature type="topological domain" description="Mitochondrial matrix" evidence="2">
    <location>
        <begin position="262"/>
        <end position="269"/>
    </location>
</feature>
<feature type="transmembrane region" description="Helical; Name=VII" evidence="2">
    <location>
        <begin position="270"/>
        <end position="286"/>
    </location>
</feature>
<feature type="topological domain" description="Mitochondrial intermembrane" evidence="2">
    <location>
        <begin position="287"/>
        <end position="298"/>
    </location>
</feature>
<feature type="transmembrane region" description="Helical; Name=VIII" evidence="2">
    <location>
        <begin position="299"/>
        <end position="327"/>
    </location>
</feature>
<feature type="topological domain" description="Mitochondrial matrix" evidence="2">
    <location>
        <begin position="328"/>
        <end position="335"/>
    </location>
</feature>
<feature type="transmembrane region" description="Helical; Name=IX" evidence="2">
    <location>
        <begin position="336"/>
        <end position="357"/>
    </location>
</feature>
<feature type="topological domain" description="Mitochondrial intermembrane" evidence="2">
    <location>
        <begin position="358"/>
        <end position="370"/>
    </location>
</feature>
<feature type="transmembrane region" description="Helical; Name=X" evidence="2">
    <location>
        <begin position="371"/>
        <end position="400"/>
    </location>
</feature>
<feature type="topological domain" description="Mitochondrial matrix" evidence="2">
    <location>
        <begin position="401"/>
        <end position="406"/>
    </location>
</feature>
<feature type="transmembrane region" description="Helical; Name=XI" evidence="2">
    <location>
        <begin position="407"/>
        <end position="433"/>
    </location>
</feature>
<feature type="topological domain" description="Mitochondrial intermembrane" evidence="2">
    <location>
        <begin position="434"/>
        <end position="446"/>
    </location>
</feature>
<feature type="transmembrane region" description="Helical; Name=XII" evidence="2">
    <location>
        <begin position="447"/>
        <end position="478"/>
    </location>
</feature>
<feature type="topological domain" description="Mitochondrial matrix" evidence="2">
    <location>
        <begin position="479"/>
        <end position="516"/>
    </location>
</feature>
<feature type="binding site" evidence="2">
    <location>
        <position position="40"/>
    </location>
    <ligand>
        <name>Na(+)</name>
        <dbReference type="ChEBI" id="CHEBI:29101"/>
    </ligand>
</feature>
<feature type="binding site" evidence="2">
    <location>
        <position position="45"/>
    </location>
    <ligand>
        <name>Na(+)</name>
        <dbReference type="ChEBI" id="CHEBI:29101"/>
    </ligand>
</feature>
<feature type="binding site" description="axial binding residue" evidence="2">
    <location>
        <position position="61"/>
    </location>
    <ligand>
        <name>Fe(II)-heme a</name>
        <dbReference type="ChEBI" id="CHEBI:61715"/>
        <note>low-spin</note>
    </ligand>
    <ligandPart>
        <name>Fe</name>
        <dbReference type="ChEBI" id="CHEBI:18248"/>
    </ligandPart>
</feature>
<feature type="binding site" evidence="2">
    <location>
        <position position="240"/>
    </location>
    <ligand>
        <name>Cu cation</name>
        <dbReference type="ChEBI" id="CHEBI:23378"/>
        <label>B</label>
    </ligand>
</feature>
<feature type="binding site" evidence="2">
    <location>
        <position position="244"/>
    </location>
    <ligand>
        <name>O2</name>
        <dbReference type="ChEBI" id="CHEBI:15379"/>
    </ligand>
</feature>
<feature type="binding site" evidence="2">
    <location>
        <position position="290"/>
    </location>
    <ligand>
        <name>Cu cation</name>
        <dbReference type="ChEBI" id="CHEBI:23378"/>
        <label>B</label>
    </ligand>
</feature>
<feature type="binding site" evidence="2">
    <location>
        <position position="291"/>
    </location>
    <ligand>
        <name>Cu cation</name>
        <dbReference type="ChEBI" id="CHEBI:23378"/>
        <label>B</label>
    </ligand>
</feature>
<feature type="binding site" evidence="2">
    <location>
        <position position="368"/>
    </location>
    <ligand>
        <name>Mg(2+)</name>
        <dbReference type="ChEBI" id="CHEBI:18420"/>
        <note>ligand shared with MT-CO2</note>
    </ligand>
</feature>
<feature type="binding site" evidence="2">
    <location>
        <position position="369"/>
    </location>
    <ligand>
        <name>Mg(2+)</name>
        <dbReference type="ChEBI" id="CHEBI:18420"/>
        <note>ligand shared with MT-CO2</note>
    </ligand>
</feature>
<feature type="binding site" description="axial binding residue" evidence="2">
    <location>
        <position position="376"/>
    </location>
    <ligand>
        <name>heme a3</name>
        <dbReference type="ChEBI" id="CHEBI:83282"/>
        <note>high-spin</note>
    </ligand>
    <ligandPart>
        <name>Fe</name>
        <dbReference type="ChEBI" id="CHEBI:18248"/>
    </ligandPart>
</feature>
<feature type="binding site" description="axial binding residue" evidence="2">
    <location>
        <position position="378"/>
    </location>
    <ligand>
        <name>Fe(II)-heme a</name>
        <dbReference type="ChEBI" id="CHEBI:61715"/>
        <note>low-spin</note>
    </ligand>
    <ligandPart>
        <name>Fe</name>
        <dbReference type="ChEBI" id="CHEBI:18248"/>
    </ligandPart>
</feature>
<feature type="binding site" evidence="2">
    <location>
        <position position="441"/>
    </location>
    <ligand>
        <name>Na(+)</name>
        <dbReference type="ChEBI" id="CHEBI:29101"/>
    </ligand>
</feature>
<feature type="cross-link" description="1'-histidyl-3'-tyrosine (His-Tyr)" evidence="2">
    <location>
        <begin position="240"/>
        <end position="244"/>
    </location>
</feature>
<accession>P48170</accession>
<evidence type="ECO:0000250" key="1">
    <source>
        <dbReference type="UniProtKB" id="P00395"/>
    </source>
</evidence>
<evidence type="ECO:0000250" key="2">
    <source>
        <dbReference type="UniProtKB" id="P00396"/>
    </source>
</evidence>
<evidence type="ECO:0000250" key="3">
    <source>
        <dbReference type="UniProtKB" id="P00401"/>
    </source>
</evidence>
<evidence type="ECO:0000305" key="4"/>
<name>COX1_ONCMY</name>
<dbReference type="EC" id="7.1.1.9"/>
<dbReference type="EMBL" id="L29771">
    <property type="protein sequence ID" value="AAB03349.1"/>
    <property type="molecule type" value="Genomic_DNA"/>
</dbReference>
<dbReference type="PIR" id="T09859">
    <property type="entry name" value="T09859"/>
</dbReference>
<dbReference type="RefSeq" id="NP_008292.1">
    <property type="nucleotide sequence ID" value="NC_001717.1"/>
</dbReference>
<dbReference type="SMR" id="P48170"/>
<dbReference type="GeneID" id="807975"/>
<dbReference type="KEGG" id="omy:807975"/>
<dbReference type="CTD" id="4512"/>
<dbReference type="OrthoDB" id="10002679at2759"/>
<dbReference type="UniPathway" id="UPA00705"/>
<dbReference type="Proteomes" id="UP000694395">
    <property type="component" value="Unplaced"/>
</dbReference>
<dbReference type="GO" id="GO:0005743">
    <property type="term" value="C:mitochondrial inner membrane"/>
    <property type="evidence" value="ECO:0007669"/>
    <property type="project" value="UniProtKB-SubCell"/>
</dbReference>
<dbReference type="GO" id="GO:0045277">
    <property type="term" value="C:respiratory chain complex IV"/>
    <property type="evidence" value="ECO:0000250"/>
    <property type="project" value="UniProtKB"/>
</dbReference>
<dbReference type="GO" id="GO:0004129">
    <property type="term" value="F:cytochrome-c oxidase activity"/>
    <property type="evidence" value="ECO:0007669"/>
    <property type="project" value="UniProtKB-EC"/>
</dbReference>
<dbReference type="GO" id="GO:0020037">
    <property type="term" value="F:heme binding"/>
    <property type="evidence" value="ECO:0007669"/>
    <property type="project" value="InterPro"/>
</dbReference>
<dbReference type="GO" id="GO:0046872">
    <property type="term" value="F:metal ion binding"/>
    <property type="evidence" value="ECO:0007669"/>
    <property type="project" value="UniProtKB-KW"/>
</dbReference>
<dbReference type="GO" id="GO:0015990">
    <property type="term" value="P:electron transport coupled proton transport"/>
    <property type="evidence" value="ECO:0007669"/>
    <property type="project" value="TreeGrafter"/>
</dbReference>
<dbReference type="GO" id="GO:0006123">
    <property type="term" value="P:mitochondrial electron transport, cytochrome c to oxygen"/>
    <property type="evidence" value="ECO:0007669"/>
    <property type="project" value="TreeGrafter"/>
</dbReference>
<dbReference type="CDD" id="cd01663">
    <property type="entry name" value="Cyt_c_Oxidase_I"/>
    <property type="match status" value="1"/>
</dbReference>
<dbReference type="FunFam" id="1.20.210.10:FF:000001">
    <property type="entry name" value="Cytochrome c oxidase subunit 1"/>
    <property type="match status" value="1"/>
</dbReference>
<dbReference type="Gene3D" id="1.20.210.10">
    <property type="entry name" value="Cytochrome c oxidase-like, subunit I domain"/>
    <property type="match status" value="1"/>
</dbReference>
<dbReference type="InterPro" id="IPR023616">
    <property type="entry name" value="Cyt_c_oxase-like_su1_dom"/>
</dbReference>
<dbReference type="InterPro" id="IPR036927">
    <property type="entry name" value="Cyt_c_oxase-like_su1_sf"/>
</dbReference>
<dbReference type="InterPro" id="IPR000883">
    <property type="entry name" value="Cyt_C_Oxase_1"/>
</dbReference>
<dbReference type="InterPro" id="IPR023615">
    <property type="entry name" value="Cyt_c_Oxase_su1_BS"/>
</dbReference>
<dbReference type="InterPro" id="IPR033944">
    <property type="entry name" value="Cyt_c_oxase_su1_dom"/>
</dbReference>
<dbReference type="PANTHER" id="PTHR10422">
    <property type="entry name" value="CYTOCHROME C OXIDASE SUBUNIT 1"/>
    <property type="match status" value="1"/>
</dbReference>
<dbReference type="PANTHER" id="PTHR10422:SF18">
    <property type="entry name" value="CYTOCHROME C OXIDASE SUBUNIT 1"/>
    <property type="match status" value="1"/>
</dbReference>
<dbReference type="Pfam" id="PF00115">
    <property type="entry name" value="COX1"/>
    <property type="match status" value="1"/>
</dbReference>
<dbReference type="PRINTS" id="PR01165">
    <property type="entry name" value="CYCOXIDASEI"/>
</dbReference>
<dbReference type="SUPFAM" id="SSF81442">
    <property type="entry name" value="Cytochrome c oxidase subunit I-like"/>
    <property type="match status" value="1"/>
</dbReference>
<dbReference type="PROSITE" id="PS50855">
    <property type="entry name" value="COX1"/>
    <property type="match status" value="1"/>
</dbReference>
<dbReference type="PROSITE" id="PS00077">
    <property type="entry name" value="COX1_CUB"/>
    <property type="match status" value="1"/>
</dbReference>
<gene>
    <name type="primary">mt-co1</name>
    <name type="synonym">coi</name>
    <name type="synonym">coxi</name>
    <name type="synonym">mtco1</name>
</gene>
<organism>
    <name type="scientific">Oncorhynchus mykiss</name>
    <name type="common">Rainbow trout</name>
    <name type="synonym">Salmo gairdneri</name>
    <dbReference type="NCBI Taxonomy" id="8022"/>
    <lineage>
        <taxon>Eukaryota</taxon>
        <taxon>Metazoa</taxon>
        <taxon>Chordata</taxon>
        <taxon>Craniata</taxon>
        <taxon>Vertebrata</taxon>
        <taxon>Euteleostomi</taxon>
        <taxon>Actinopterygii</taxon>
        <taxon>Neopterygii</taxon>
        <taxon>Teleostei</taxon>
        <taxon>Protacanthopterygii</taxon>
        <taxon>Salmoniformes</taxon>
        <taxon>Salmonidae</taxon>
        <taxon>Salmoninae</taxon>
        <taxon>Oncorhynchus</taxon>
    </lineage>
</organism>
<sequence>MAITRWFFSTNHKDIGTLYLVFGAWAGMVGTALSLLIRAELSQPGALLGDDQIYNVIVTAHAFVMIFFMVMPIMIGGFGNWLIPLMIGAPDMAFPRMNNMSFWLLPPSFLLLLSSSGVEAGAGTGWTVYPPLAGNLAHAGASVDLTIFSLHLAGISSILGAINFITTIINMKPPAISQYQTPLFVWAVLVTAVLLLLSLPVLAAGITMLLTDRNLNTTFFDPAGGGDPILYQHLFWFFSHPEVYILILPGFGMISHIVAYYSGKKEPFGYMGMVWAMMAIGLLGFIVWAHHMFTVGMDVDTRAYFTSATMIIAIPTGVKVFSWLATLHGGSIKWETPLLWALGFIFLFTVGGLTGIVLANSSLDIVLHDTYYVVAHFHYVLSMGAVFAIMGAFVHWFPLFTGYTLHSTWTKIHFGIMFIGVNLTFFPQHFLGLAGMPRRYSDYPDAYTLWNTVSSIGSLVSLVAVIMFLFILWEAFAAKREVASIELTSTNVEWLHGCPPPYHTFEEPAFVQVQAN</sequence>